<keyword id="KW-0002">3D-structure</keyword>
<keyword id="KW-0378">Hydrolase</keyword>
<keyword id="KW-0904">Protein phosphatase</keyword>
<keyword id="KW-1185">Reference proteome</keyword>
<proteinExistence type="evidence at protein level"/>
<gene>
    <name type="primary">ywlE</name>
    <name type="ordered locus">BSU36930</name>
    <name type="ORF">ipc-31d</name>
</gene>
<evidence type="ECO:0000250" key="1">
    <source>
        <dbReference type="UniProtKB" id="P11064"/>
    </source>
</evidence>
<evidence type="ECO:0000269" key="2">
    <source>
    </source>
</evidence>
<evidence type="ECO:0000269" key="3">
    <source>
    </source>
</evidence>
<evidence type="ECO:0000269" key="4">
    <source>
    </source>
</evidence>
<evidence type="ECO:0000269" key="5">
    <source>
    </source>
</evidence>
<evidence type="ECO:0000269" key="6">
    <source>
    </source>
</evidence>
<evidence type="ECO:0000305" key="7"/>
<evidence type="ECO:0000305" key="8">
    <source>
    </source>
</evidence>
<evidence type="ECO:0007829" key="9">
    <source>
        <dbReference type="PDB" id="1ZGG"/>
    </source>
</evidence>
<evidence type="ECO:0007829" key="10">
    <source>
        <dbReference type="PDB" id="4ETN"/>
    </source>
</evidence>
<comment type="function">
    <text evidence="4 5 6">Catalyzes the specific dephosphorylation of phosphoarginine residues in a large number of proteins. Counteracts the protein arginine kinase McsB in vivo. Can dephosphorylate CtsR-P; thus, can restore the DNA-binding ability of the CtsR repressor by reversing the McsB-mediated phosphorylation. Is the only active pArg phosphatase present in B.subtilis. Exhibits almost no activity against pSer, pThr, or pTyr peptides. Appears to play a role in B.subtilis stress resistance. Protein arginine phosphorylation has a physiologically important role and is involved in the regulation of many critical cellular processes, such as protein homeostasis, motility, competence, and stringent and stress responses, by regulating gene expression and protein activity.</text>
</comment>
<comment type="catalytic activity">
    <reaction evidence="5">
        <text>N(omega)-phospho-L-arginyl-[protein] + H2O = L-arginyl-[protein] + phosphate</text>
        <dbReference type="Rhea" id="RHEA:43380"/>
        <dbReference type="Rhea" id="RHEA-COMP:10532"/>
        <dbReference type="Rhea" id="RHEA-COMP:10533"/>
        <dbReference type="ChEBI" id="CHEBI:15377"/>
        <dbReference type="ChEBI" id="CHEBI:29965"/>
        <dbReference type="ChEBI" id="CHEBI:43474"/>
        <dbReference type="ChEBI" id="CHEBI:83226"/>
        <dbReference type="EC" id="3.9.1.2"/>
    </reaction>
</comment>
<comment type="activity regulation">
    <text evidence="2">Efficiently inhibited by Cu(2+) ion, Zn(2+) ion, sodium pyrophosphate and N-ethylmaleimide, while the addition of Mg(2+), Ca(2+) or Fe(3+) ions has minimal effect. Inhibited in a competitive manner by vanadate.</text>
</comment>
<comment type="biophysicochemical properties">
    <kinetics>
        <KM evidence="2">0.157 mM for p-nitrophenyl-phosphate (at 37 degrees Celsius and pH 5.5)</KM>
        <KM evidence="3">28 mM for p-nitrophenyl-phosphate (at 55 degrees Celsius)</KM>
        <KM evidence="5">61.41 mM for p-nitrophenyl-phosphate (at 40 degrees Celsius and pH 8.0)</KM>
        <text evidence="2 5">kcat is 0.010 sec(-1) with pNPP as substrate (at 37 degrees Celsius and pH 5.5) (PubMed:15995210). kcat is 0.13 sec(-1) with pNPP as substrate (at 40 degrees Celsius and pH 8.0) (PubMed:23770242). pNPP is a phosphotyrosine mimicking compound.</text>
    </kinetics>
    <phDependence>
        <text evidence="2">Optimum pH is 5.5 with pNPP as substrate.</text>
    </phDependence>
</comment>
<comment type="induction">
    <text evidence="2">Expression is up-regulated in the exponential phase of growth, followed by a significant and gradual reduction in the stationary/sporulation phase. Is not up-regulated during ethanol stress.</text>
</comment>
<comment type="disruption phenotype">
    <text evidence="2 4 5 6">Cellular protein arginine phosphorylation is only detectable in a ywlE mutant and not in the wild-type strain, and global gene expression is significantly impacted in the mutant strain (PubMed:22517742, PubMed:24263382). Cells lacking this gene are impaired in dephosphorylating McsB-P (PubMed:23770242). They also show a reduced resistance to ethanol stress (PubMed:15995210).</text>
</comment>
<comment type="similarity">
    <text evidence="7">Belongs to the low molecular weight phosphotyrosine protein phosphatase family.</text>
</comment>
<comment type="caution">
    <text evidence="8">Was originally thought to be a protein-tyrosine-phosphatase (PubMed:15995210). Was later shown to function as an arginine phosphatase in vivo and in vitro (PubMed:22517742, PubMed:23770242).</text>
</comment>
<reference key="1">
    <citation type="journal article" date="1995" name="J. Bacteriol.">
        <title>Two genes encoding uracil phosphoribosyltransferase are present in Bacillus subtilis.</title>
        <authorList>
            <person name="Martinussen J."/>
            <person name="Glaser P."/>
            <person name="Andersen P.S."/>
            <person name="Saxild H.H."/>
        </authorList>
    </citation>
    <scope>NUCLEOTIDE SEQUENCE [GENOMIC DNA]</scope>
    <source>
        <strain>168</strain>
    </source>
</reference>
<reference key="2">
    <citation type="journal article" date="1997" name="Nature">
        <title>The complete genome sequence of the Gram-positive bacterium Bacillus subtilis.</title>
        <authorList>
            <person name="Kunst F."/>
            <person name="Ogasawara N."/>
            <person name="Moszer I."/>
            <person name="Albertini A.M."/>
            <person name="Alloni G."/>
            <person name="Azevedo V."/>
            <person name="Bertero M.G."/>
            <person name="Bessieres P."/>
            <person name="Bolotin A."/>
            <person name="Borchert S."/>
            <person name="Borriss R."/>
            <person name="Boursier L."/>
            <person name="Brans A."/>
            <person name="Braun M."/>
            <person name="Brignell S.C."/>
            <person name="Bron S."/>
            <person name="Brouillet S."/>
            <person name="Bruschi C.V."/>
            <person name="Caldwell B."/>
            <person name="Capuano V."/>
            <person name="Carter N.M."/>
            <person name="Choi S.-K."/>
            <person name="Codani J.-J."/>
            <person name="Connerton I.F."/>
            <person name="Cummings N.J."/>
            <person name="Daniel R.A."/>
            <person name="Denizot F."/>
            <person name="Devine K.M."/>
            <person name="Duesterhoeft A."/>
            <person name="Ehrlich S.D."/>
            <person name="Emmerson P.T."/>
            <person name="Entian K.-D."/>
            <person name="Errington J."/>
            <person name="Fabret C."/>
            <person name="Ferrari E."/>
            <person name="Foulger D."/>
            <person name="Fritz C."/>
            <person name="Fujita M."/>
            <person name="Fujita Y."/>
            <person name="Fuma S."/>
            <person name="Galizzi A."/>
            <person name="Galleron N."/>
            <person name="Ghim S.-Y."/>
            <person name="Glaser P."/>
            <person name="Goffeau A."/>
            <person name="Golightly E.J."/>
            <person name="Grandi G."/>
            <person name="Guiseppi G."/>
            <person name="Guy B.J."/>
            <person name="Haga K."/>
            <person name="Haiech J."/>
            <person name="Harwood C.R."/>
            <person name="Henaut A."/>
            <person name="Hilbert H."/>
            <person name="Holsappel S."/>
            <person name="Hosono S."/>
            <person name="Hullo M.-F."/>
            <person name="Itaya M."/>
            <person name="Jones L.-M."/>
            <person name="Joris B."/>
            <person name="Karamata D."/>
            <person name="Kasahara Y."/>
            <person name="Klaerr-Blanchard M."/>
            <person name="Klein C."/>
            <person name="Kobayashi Y."/>
            <person name="Koetter P."/>
            <person name="Koningstein G."/>
            <person name="Krogh S."/>
            <person name="Kumano M."/>
            <person name="Kurita K."/>
            <person name="Lapidus A."/>
            <person name="Lardinois S."/>
            <person name="Lauber J."/>
            <person name="Lazarevic V."/>
            <person name="Lee S.-M."/>
            <person name="Levine A."/>
            <person name="Liu H."/>
            <person name="Masuda S."/>
            <person name="Mauel C."/>
            <person name="Medigue C."/>
            <person name="Medina N."/>
            <person name="Mellado R.P."/>
            <person name="Mizuno M."/>
            <person name="Moestl D."/>
            <person name="Nakai S."/>
            <person name="Noback M."/>
            <person name="Noone D."/>
            <person name="O'Reilly M."/>
            <person name="Ogawa K."/>
            <person name="Ogiwara A."/>
            <person name="Oudega B."/>
            <person name="Park S.-H."/>
            <person name="Parro V."/>
            <person name="Pohl T.M."/>
            <person name="Portetelle D."/>
            <person name="Porwollik S."/>
            <person name="Prescott A.M."/>
            <person name="Presecan E."/>
            <person name="Pujic P."/>
            <person name="Purnelle B."/>
            <person name="Rapoport G."/>
            <person name="Rey M."/>
            <person name="Reynolds S."/>
            <person name="Rieger M."/>
            <person name="Rivolta C."/>
            <person name="Rocha E."/>
            <person name="Roche B."/>
            <person name="Rose M."/>
            <person name="Sadaie Y."/>
            <person name="Sato T."/>
            <person name="Scanlan E."/>
            <person name="Schleich S."/>
            <person name="Schroeter R."/>
            <person name="Scoffone F."/>
            <person name="Sekiguchi J."/>
            <person name="Sekowska A."/>
            <person name="Seror S.J."/>
            <person name="Serror P."/>
            <person name="Shin B.-S."/>
            <person name="Soldo B."/>
            <person name="Sorokin A."/>
            <person name="Tacconi E."/>
            <person name="Takagi T."/>
            <person name="Takahashi H."/>
            <person name="Takemaru K."/>
            <person name="Takeuchi M."/>
            <person name="Tamakoshi A."/>
            <person name="Tanaka T."/>
            <person name="Terpstra P."/>
            <person name="Tognoni A."/>
            <person name="Tosato V."/>
            <person name="Uchiyama S."/>
            <person name="Vandenbol M."/>
            <person name="Vannier F."/>
            <person name="Vassarotti A."/>
            <person name="Viari A."/>
            <person name="Wambutt R."/>
            <person name="Wedler E."/>
            <person name="Wedler H."/>
            <person name="Weitzenegger T."/>
            <person name="Winters P."/>
            <person name="Wipat A."/>
            <person name="Yamamoto H."/>
            <person name="Yamane K."/>
            <person name="Yasumoto K."/>
            <person name="Yata K."/>
            <person name="Yoshida K."/>
            <person name="Yoshikawa H.-F."/>
            <person name="Zumstein E."/>
            <person name="Yoshikawa H."/>
            <person name="Danchin A."/>
        </authorList>
    </citation>
    <scope>NUCLEOTIDE SEQUENCE [LARGE SCALE GENOMIC DNA]</scope>
    <source>
        <strain>168</strain>
    </source>
</reference>
<reference key="3">
    <citation type="journal article" date="2005" name="J. Bacteriol.">
        <title>Low-molecular-weight protein tyrosine phosphatases of Bacillus subtilis.</title>
        <authorList>
            <person name="Musumeci L."/>
            <person name="Bongiorni C."/>
            <person name="Tautz L."/>
            <person name="Edwards R.A."/>
            <person name="Osterman A."/>
            <person name="Perego M."/>
            <person name="Mustelin T."/>
            <person name="Bottini N."/>
        </authorList>
    </citation>
    <scope>DISRUPTION PHENOTYPE</scope>
    <scope>INDUCTION</scope>
    <scope>MUTAGENESIS OF CYS-7; ARG-13 AND ASP-118</scope>
    <scope>ACTIVITY REGULATION</scope>
    <scope>BIOPHYSICOCHEMICAL PROPERTIES</scope>
    <source>
        <strain>168 / JH642</strain>
    </source>
</reference>
<reference key="4">
    <citation type="journal article" date="2012" name="Proc. Natl. Acad. Sci. U.S.A.">
        <title>Global impact of protein arginine phosphorylation on the physiology of Bacillus subtilis.</title>
        <authorList>
            <person name="Elsholz A.K."/>
            <person name="Turgay K."/>
            <person name="Michalik S."/>
            <person name="Hessling B."/>
            <person name="Gronau K."/>
            <person name="Oertel D."/>
            <person name="Mader U."/>
            <person name="Bernhardt J."/>
            <person name="Becher D."/>
            <person name="Hecker M."/>
            <person name="Gerth U."/>
        </authorList>
    </citation>
    <scope>FUNCTION AS AN ARGININE PHOSPHATASE</scope>
    <scope>IDENTIFICATION OF SUBSTRATES</scope>
    <scope>DISRUPTION PHENOTYPE</scope>
    <source>
        <strain>168</strain>
    </source>
</reference>
<reference key="5">
    <citation type="journal article" date="2014" name="Mol. Cell. Proteomics">
        <title>Quantitative phosphoproteomics reveals the role of protein arginine phosphorylation in the bacterial stress response.</title>
        <authorList>
            <person name="Schmidt A."/>
            <person name="Trentini D.B."/>
            <person name="Spiess S."/>
            <person name="Fuhrmann J."/>
            <person name="Ammerer G."/>
            <person name="Mechtler K."/>
            <person name="Clausen T."/>
        </authorList>
    </citation>
    <scope>FUNCTION</scope>
    <scope>IDENTIFICATION OF SUBSTRATES</scope>
    <scope>DISRUPTION PHENOTYPE</scope>
    <source>
        <strain>168</strain>
    </source>
</reference>
<reference key="6">
    <citation type="journal article" date="2006" name="J. Bacteriol.">
        <title>Solution structure of a low-molecular-weight protein tyrosine phosphatase from Bacillus subtilis.</title>
        <authorList>
            <person name="Xu H."/>
            <person name="Xia B."/>
            <person name="Jin C."/>
        </authorList>
    </citation>
    <scope>STRUCTURE BY NMR</scope>
    <scope>KINETIC PARAMETERS</scope>
</reference>
<reference key="7">
    <citation type="submission" date="2012-04" db="PDB data bank">
        <title>Crystal Structure of YwlE from Bacillus subtilis.</title>
        <authorList>
            <person name="Cao X.F."/>
        </authorList>
    </citation>
    <scope>X-RAY CRYSTALLOGRAPHY (1.80 ANGSTROMS)</scope>
</reference>
<reference key="8">
    <citation type="submission" date="2012-04" db="PDB data bank">
        <title>Crystal structure of YwlE mutant from Bacillus subtilis.</title>
        <authorList>
            <person name="Cao X.F."/>
            <person name="Su X.D."/>
        </authorList>
    </citation>
    <scope>X-RAY CRYSTALLOGRAPHY (1.10 ANGSTROMS) OF MUTANT SER-12 IN COMPLEX WITH PHOSPHATE</scope>
</reference>
<reference key="9">
    <citation type="journal article" date="2013" name="Cell Rep.">
        <title>Structural basis for recognizing phosphoarginine and evolving residue-specific protein phosphatases in gram-positive bacteria.</title>
        <authorList>
            <person name="Fuhrmann J."/>
            <person name="Mierzwa B."/>
            <person name="Trentini D.B."/>
            <person name="Spiess S."/>
            <person name="Lehner A."/>
            <person name="Charpentier E."/>
            <person name="Clausen T."/>
        </authorList>
    </citation>
    <scope>X-RAY CRYSTALLOGRAPHY (1.70 ANGSTROMS) OF WILD-TYPE IN COMPLEX WITH PHOSPHATE AND MUTANT PHOSPHO-SER-7</scope>
    <scope>FUNCTION AS AN ARGININE PHOSPHATASE</scope>
    <scope>CATALYTIC ACTIVITY</scope>
    <scope>SUBSTRATE SPECIFICITY</scope>
    <scope>KINETIC PARAMETERS</scope>
    <scope>DISRUPTION PHENOTYPE</scope>
    <scope>SUBSTRATE DISCRIMINATION SITE</scope>
    <scope>REACTION MECHANISM</scope>
    <scope>ACTIVE SITES</scope>
    <scope>MUTAGENESIS OF THR-11; ASP-118 AND PHE-120</scope>
    <source>
        <strain>168</strain>
    </source>
</reference>
<feature type="chain" id="PRO_0000046579" description="Protein-arginine-phosphatase">
    <location>
        <begin position="1"/>
        <end position="150"/>
    </location>
</feature>
<feature type="active site" description="Nucleophile" evidence="5">
    <location>
        <position position="7"/>
    </location>
</feature>
<feature type="active site" evidence="1">
    <location>
        <position position="13"/>
    </location>
</feature>
<feature type="active site" description="Proton donor/acceptor" evidence="5">
    <location>
        <position position="118"/>
    </location>
</feature>
<feature type="binding site">
    <location>
        <begin position="8"/>
        <end position="13"/>
    </location>
    <ligand>
        <name>substrate</name>
    </ligand>
</feature>
<feature type="site" description="Important for substrate discrimination">
    <location>
        <position position="11"/>
    </location>
</feature>
<feature type="mutagenesis site" description="Complete loss of phosphatase activity." evidence="2">
    <original>C</original>
    <variation>S</variation>
    <location>
        <position position="7"/>
    </location>
</feature>
<feature type="mutagenesis site" description="18-fold reduction in p-Arg phosphatase activity and 22-fold increase in p-Tyr phosphatase activity." evidence="5">
    <original>T</original>
    <variation>I</variation>
    <location>
        <position position="11"/>
    </location>
</feature>
<feature type="mutagenesis site" description="18-fold reduction in p-Arg phosphatase activity and 11-fold increase in p-Tyr phosphatase activity." evidence="5">
    <original>T</original>
    <variation>V</variation>
    <location>
        <position position="11"/>
    </location>
</feature>
<feature type="mutagenesis site" description="Completely loss of phosphatase activity." evidence="2">
    <original>R</original>
    <variation>K</variation>
    <location>
        <position position="13"/>
    </location>
</feature>
<feature type="mutagenesis site" description="Completely loss of phosphatase activity." evidence="2 5">
    <original>D</original>
    <variation>A</variation>
    <location>
        <position position="118"/>
    </location>
</feature>
<feature type="mutagenesis site" description="60-fold reduction in p-Arg phosphatase activity and 4-fold reduction in p-Tyr phosphatase activity." evidence="5">
    <original>F</original>
    <variation>A</variation>
    <location>
        <position position="120"/>
    </location>
</feature>
<feature type="strand" evidence="10">
    <location>
        <begin position="1"/>
        <end position="12"/>
    </location>
</feature>
<feature type="helix" evidence="10">
    <location>
        <begin position="13"/>
        <end position="28"/>
    </location>
</feature>
<feature type="strand" evidence="10">
    <location>
        <begin position="32"/>
        <end position="38"/>
    </location>
</feature>
<feature type="helix" evidence="10">
    <location>
        <begin position="49"/>
        <end position="57"/>
    </location>
</feature>
<feature type="helix" evidence="10">
    <location>
        <begin position="71"/>
        <end position="76"/>
    </location>
</feature>
<feature type="strand" evidence="10">
    <location>
        <begin position="78"/>
        <end position="84"/>
    </location>
</feature>
<feature type="helix" evidence="10">
    <location>
        <begin position="85"/>
        <end position="94"/>
    </location>
</feature>
<feature type="helix" evidence="10">
    <location>
        <begin position="96"/>
        <end position="101"/>
    </location>
</feature>
<feature type="strand" evidence="10">
    <location>
        <begin position="102"/>
        <end position="104"/>
    </location>
</feature>
<feature type="helix" evidence="10">
    <location>
        <begin position="105"/>
        <end position="110"/>
    </location>
</feature>
<feature type="strand" evidence="9">
    <location>
        <begin position="111"/>
        <end position="113"/>
    </location>
</feature>
<feature type="helix" evidence="10">
    <location>
        <begin position="124"/>
        <end position="145"/>
    </location>
</feature>
<feature type="turn" evidence="9">
    <location>
        <begin position="146"/>
        <end position="148"/>
    </location>
</feature>
<dbReference type="EC" id="3.9.1.2" evidence="5"/>
<dbReference type="EMBL" id="Z38002">
    <property type="protein sequence ID" value="CAA86107.1"/>
    <property type="molecule type" value="Genomic_DNA"/>
</dbReference>
<dbReference type="EMBL" id="AL009126">
    <property type="protein sequence ID" value="CAB15710.1"/>
    <property type="molecule type" value="Genomic_DNA"/>
</dbReference>
<dbReference type="PIR" id="I40479">
    <property type="entry name" value="S49360"/>
</dbReference>
<dbReference type="PDB" id="1ZGG">
    <property type="method" value="NMR"/>
    <property type="chains" value="A=1-150"/>
</dbReference>
<dbReference type="PDB" id="4ETI">
    <property type="method" value="X-ray"/>
    <property type="resolution" value="1.80 A"/>
    <property type="chains" value="A=1-150"/>
</dbReference>
<dbReference type="PDB" id="4ETN">
    <property type="method" value="X-ray"/>
    <property type="resolution" value="1.10 A"/>
    <property type="chains" value="A=1-150"/>
</dbReference>
<dbReference type="PDB" id="4KK3">
    <property type="method" value="X-ray"/>
    <property type="resolution" value="1.70 A"/>
    <property type="chains" value="A=1-150"/>
</dbReference>
<dbReference type="PDB" id="4KK4">
    <property type="method" value="X-ray"/>
    <property type="resolution" value="1.80 A"/>
    <property type="chains" value="A=1-150"/>
</dbReference>
<dbReference type="PDBsum" id="1ZGG"/>
<dbReference type="PDBsum" id="4ETI"/>
<dbReference type="PDBsum" id="4ETN"/>
<dbReference type="PDBsum" id="4KK3"/>
<dbReference type="PDBsum" id="4KK4"/>
<dbReference type="BMRB" id="P39155"/>
<dbReference type="SMR" id="P39155"/>
<dbReference type="FunCoup" id="P39155">
    <property type="interactions" value="3"/>
</dbReference>
<dbReference type="MINT" id="P39155"/>
<dbReference type="STRING" id="224308.BSU36930"/>
<dbReference type="PaxDb" id="224308-BSU36930"/>
<dbReference type="EnsemblBacteria" id="CAB15710">
    <property type="protein sequence ID" value="CAB15710"/>
    <property type="gene ID" value="BSU_36930"/>
</dbReference>
<dbReference type="GeneID" id="937021"/>
<dbReference type="KEGG" id="bsu:BSU36930"/>
<dbReference type="PATRIC" id="fig|224308.179.peg.4000"/>
<dbReference type="eggNOG" id="COG0394">
    <property type="taxonomic scope" value="Bacteria"/>
</dbReference>
<dbReference type="InParanoid" id="P39155"/>
<dbReference type="OrthoDB" id="9784339at2"/>
<dbReference type="PhylomeDB" id="P39155"/>
<dbReference type="BioCyc" id="BSUB:BSU36930-MONOMER"/>
<dbReference type="BioCyc" id="MetaCyc:BSU36930-MONOMER"/>
<dbReference type="BRENDA" id="3.1.3.48">
    <property type="organism ID" value="658"/>
</dbReference>
<dbReference type="BRENDA" id="3.9.1.2">
    <property type="organism ID" value="658"/>
</dbReference>
<dbReference type="SABIO-RK" id="P39155"/>
<dbReference type="EvolutionaryTrace" id="P39155"/>
<dbReference type="Proteomes" id="UP000001570">
    <property type="component" value="Chromosome"/>
</dbReference>
<dbReference type="GO" id="GO:0098627">
    <property type="term" value="F:protein arginine phosphatase activity"/>
    <property type="evidence" value="ECO:0007669"/>
    <property type="project" value="UniProtKB-EC"/>
</dbReference>
<dbReference type="GO" id="GO:0004725">
    <property type="term" value="F:protein tyrosine phosphatase activity"/>
    <property type="evidence" value="ECO:0000318"/>
    <property type="project" value="GO_Central"/>
</dbReference>
<dbReference type="CDD" id="cd16344">
    <property type="entry name" value="LMWPAP"/>
    <property type="match status" value="1"/>
</dbReference>
<dbReference type="Gene3D" id="3.40.50.2300">
    <property type="match status" value="1"/>
</dbReference>
<dbReference type="InterPro" id="IPR050438">
    <property type="entry name" value="LMW_PTPase"/>
</dbReference>
<dbReference type="InterPro" id="IPR023485">
    <property type="entry name" value="Ptyr_pPase"/>
</dbReference>
<dbReference type="InterPro" id="IPR036196">
    <property type="entry name" value="Ptyr_pPase_sf"/>
</dbReference>
<dbReference type="InterPro" id="IPR017867">
    <property type="entry name" value="Tyr_phospatase_low_mol_wt"/>
</dbReference>
<dbReference type="PANTHER" id="PTHR11717">
    <property type="entry name" value="LOW MOLECULAR WEIGHT PROTEIN TYROSINE PHOSPHATASE"/>
    <property type="match status" value="1"/>
</dbReference>
<dbReference type="PANTHER" id="PTHR11717:SF31">
    <property type="entry name" value="LOW MOLECULAR WEIGHT PROTEIN-TYROSINE-PHOSPHATASE ETP-RELATED"/>
    <property type="match status" value="1"/>
</dbReference>
<dbReference type="Pfam" id="PF01451">
    <property type="entry name" value="LMWPc"/>
    <property type="match status" value="1"/>
</dbReference>
<dbReference type="PRINTS" id="PR00719">
    <property type="entry name" value="LMWPTPASE"/>
</dbReference>
<dbReference type="SMART" id="SM00226">
    <property type="entry name" value="LMWPc"/>
    <property type="match status" value="1"/>
</dbReference>
<dbReference type="SUPFAM" id="SSF52788">
    <property type="entry name" value="Phosphotyrosine protein phosphatases I"/>
    <property type="match status" value="1"/>
</dbReference>
<protein>
    <recommendedName>
        <fullName>Protein-arginine-phosphatase</fullName>
        <shortName>PAP</shortName>
        <ecNumber evidence="5">3.9.1.2</ecNumber>
    </recommendedName>
    <alternativeName>
        <fullName>Phosphoarginine phosphatase</fullName>
    </alternativeName>
</protein>
<organism>
    <name type="scientific">Bacillus subtilis (strain 168)</name>
    <dbReference type="NCBI Taxonomy" id="224308"/>
    <lineage>
        <taxon>Bacteria</taxon>
        <taxon>Bacillati</taxon>
        <taxon>Bacillota</taxon>
        <taxon>Bacilli</taxon>
        <taxon>Bacillales</taxon>
        <taxon>Bacillaceae</taxon>
        <taxon>Bacillus</taxon>
    </lineage>
</organism>
<sequence>MDIIFVCTGNTCRSPMAEALFKSIAEREGLNVNVRSAGVFASPNGKATPHAVEALFEKHIALNHVSSPLTEELMESADLVLAMTHQHKQIIASQFGRYRDKVFTLKEYVTGSHGDVLDPFGGSIDIYKQTRDELEELLRQLAKQLKKDRR</sequence>
<name>PAP_BACSU</name>
<accession>P39155</accession>